<feature type="chain" id="PRO_0000240077" description="NADH-quinone oxidoreductase subunit H 2">
    <location>
        <begin position="1"/>
        <end position="329"/>
    </location>
</feature>
<feature type="transmembrane region" description="Helical" evidence="1">
    <location>
        <begin position="12"/>
        <end position="32"/>
    </location>
</feature>
<feature type="transmembrane region" description="Helical" evidence="1">
    <location>
        <begin position="78"/>
        <end position="98"/>
    </location>
</feature>
<feature type="transmembrane region" description="Helical" evidence="1">
    <location>
        <begin position="120"/>
        <end position="140"/>
    </location>
</feature>
<feature type="transmembrane region" description="Helical" evidence="1">
    <location>
        <begin position="159"/>
        <end position="179"/>
    </location>
</feature>
<feature type="transmembrane region" description="Helical" evidence="1">
    <location>
        <begin position="191"/>
        <end position="211"/>
    </location>
</feature>
<feature type="transmembrane region" description="Helical" evidence="1">
    <location>
        <begin position="242"/>
        <end position="262"/>
    </location>
</feature>
<feature type="transmembrane region" description="Helical" evidence="1">
    <location>
        <begin position="270"/>
        <end position="290"/>
    </location>
</feature>
<feature type="transmembrane region" description="Helical" evidence="1">
    <location>
        <begin position="309"/>
        <end position="329"/>
    </location>
</feature>
<gene>
    <name evidence="1" type="primary">nuoH2</name>
    <name type="ordered locus">GSU3436</name>
</gene>
<comment type="function">
    <text evidence="1">NDH-1 shuttles electrons from NADH, via FMN and iron-sulfur (Fe-S) centers, to quinones in the respiratory chain. The immediate electron acceptor for the enzyme in this species is believed to be ubiquinone. Couples the redox reaction to proton translocation (for every two electrons transferred, four hydrogen ions are translocated across the cytoplasmic membrane), and thus conserves the redox energy in a proton gradient. This subunit may bind ubiquinone.</text>
</comment>
<comment type="catalytic activity">
    <reaction evidence="1">
        <text>a quinone + NADH + 5 H(+)(in) = a quinol + NAD(+) + 4 H(+)(out)</text>
        <dbReference type="Rhea" id="RHEA:57888"/>
        <dbReference type="ChEBI" id="CHEBI:15378"/>
        <dbReference type="ChEBI" id="CHEBI:24646"/>
        <dbReference type="ChEBI" id="CHEBI:57540"/>
        <dbReference type="ChEBI" id="CHEBI:57945"/>
        <dbReference type="ChEBI" id="CHEBI:132124"/>
    </reaction>
</comment>
<comment type="subunit">
    <text evidence="1">NDH-1 is composed of 14 different subunits. Subunits NuoA, H, J, K, L, M, N constitute the membrane sector of the complex.</text>
</comment>
<comment type="subcellular location">
    <subcellularLocation>
        <location evidence="1">Cell inner membrane</location>
        <topology evidence="1">Multi-pass membrane protein</topology>
    </subcellularLocation>
</comment>
<comment type="similarity">
    <text evidence="1">Belongs to the complex I subunit 1 family.</text>
</comment>
<reference key="1">
    <citation type="journal article" date="2003" name="Science">
        <title>Genome of Geobacter sulfurreducens: metal reduction in subsurface environments.</title>
        <authorList>
            <person name="Methe B.A."/>
            <person name="Nelson K.E."/>
            <person name="Eisen J.A."/>
            <person name="Paulsen I.T."/>
            <person name="Nelson W.C."/>
            <person name="Heidelberg J.F."/>
            <person name="Wu D."/>
            <person name="Wu M."/>
            <person name="Ward N.L."/>
            <person name="Beanan M.J."/>
            <person name="Dodson R.J."/>
            <person name="Madupu R."/>
            <person name="Brinkac L.M."/>
            <person name="Daugherty S.C."/>
            <person name="DeBoy R.T."/>
            <person name="Durkin A.S."/>
            <person name="Gwinn M.L."/>
            <person name="Kolonay J.F."/>
            <person name="Sullivan S.A."/>
            <person name="Haft D.H."/>
            <person name="Selengut J."/>
            <person name="Davidsen T.M."/>
            <person name="Zafar N."/>
            <person name="White O."/>
            <person name="Tran B."/>
            <person name="Romero C."/>
            <person name="Forberger H.A."/>
            <person name="Weidman J.F."/>
            <person name="Khouri H.M."/>
            <person name="Feldblyum T.V."/>
            <person name="Utterback T.R."/>
            <person name="Van Aken S.E."/>
            <person name="Lovley D.R."/>
            <person name="Fraser C.M."/>
        </authorList>
    </citation>
    <scope>NUCLEOTIDE SEQUENCE [LARGE SCALE GENOMIC DNA]</scope>
    <source>
        <strain>ATCC 51573 / DSM 12127 / PCA</strain>
    </source>
</reference>
<name>NUOH2_GEOSL</name>
<organism>
    <name type="scientific">Geobacter sulfurreducens (strain ATCC 51573 / DSM 12127 / PCA)</name>
    <dbReference type="NCBI Taxonomy" id="243231"/>
    <lineage>
        <taxon>Bacteria</taxon>
        <taxon>Pseudomonadati</taxon>
        <taxon>Thermodesulfobacteriota</taxon>
        <taxon>Desulfuromonadia</taxon>
        <taxon>Geobacterales</taxon>
        <taxon>Geobacteraceae</taxon>
        <taxon>Geobacter</taxon>
    </lineage>
</organism>
<dbReference type="EC" id="7.1.1.-" evidence="1"/>
<dbReference type="EMBL" id="AE017180">
    <property type="protein sequence ID" value="AAR36826.1"/>
    <property type="molecule type" value="Genomic_DNA"/>
</dbReference>
<dbReference type="RefSeq" id="NP_954476.1">
    <property type="nucleotide sequence ID" value="NC_002939.5"/>
</dbReference>
<dbReference type="SMR" id="Q746T2"/>
<dbReference type="FunCoup" id="Q746T2">
    <property type="interactions" value="200"/>
</dbReference>
<dbReference type="STRING" id="243231.GSU3436"/>
<dbReference type="TCDB" id="3.D.1.5.1">
    <property type="family name" value="the h+ or na+-translocating nadh dehydrogenase (ndh) family"/>
</dbReference>
<dbReference type="DNASU" id="2686874"/>
<dbReference type="EnsemblBacteria" id="AAR36826">
    <property type="protein sequence ID" value="AAR36826"/>
    <property type="gene ID" value="GSU3436"/>
</dbReference>
<dbReference type="KEGG" id="gsu:GSU3436"/>
<dbReference type="PATRIC" id="fig|243231.5.peg.3458"/>
<dbReference type="eggNOG" id="COG1005">
    <property type="taxonomic scope" value="Bacteria"/>
</dbReference>
<dbReference type="HOGENOM" id="CLU_015134_0_1_7"/>
<dbReference type="InParanoid" id="Q746T2"/>
<dbReference type="OrthoDB" id="9803734at2"/>
<dbReference type="Proteomes" id="UP000000577">
    <property type="component" value="Chromosome"/>
</dbReference>
<dbReference type="GO" id="GO:0005886">
    <property type="term" value="C:plasma membrane"/>
    <property type="evidence" value="ECO:0007669"/>
    <property type="project" value="UniProtKB-SubCell"/>
</dbReference>
<dbReference type="GO" id="GO:0045271">
    <property type="term" value="C:respiratory chain complex I"/>
    <property type="evidence" value="ECO:0000318"/>
    <property type="project" value="GO_Central"/>
</dbReference>
<dbReference type="GO" id="GO:0016655">
    <property type="term" value="F:oxidoreductase activity, acting on NAD(P)H, quinone or similar compound as acceptor"/>
    <property type="evidence" value="ECO:0007669"/>
    <property type="project" value="UniProtKB-UniRule"/>
</dbReference>
<dbReference type="GO" id="GO:0048038">
    <property type="term" value="F:quinone binding"/>
    <property type="evidence" value="ECO:0007669"/>
    <property type="project" value="UniProtKB-KW"/>
</dbReference>
<dbReference type="GO" id="GO:0009060">
    <property type="term" value="P:aerobic respiration"/>
    <property type="evidence" value="ECO:0000318"/>
    <property type="project" value="GO_Central"/>
</dbReference>
<dbReference type="HAMAP" id="MF_01350">
    <property type="entry name" value="NDH1_NuoH"/>
    <property type="match status" value="1"/>
</dbReference>
<dbReference type="InterPro" id="IPR001694">
    <property type="entry name" value="NADH_UbQ_OxRdtase_su1/FPO"/>
</dbReference>
<dbReference type="InterPro" id="IPR018086">
    <property type="entry name" value="NADH_UbQ_OxRdtase_su1_CS"/>
</dbReference>
<dbReference type="NCBIfam" id="NF004741">
    <property type="entry name" value="PRK06076.1-2"/>
    <property type="match status" value="1"/>
</dbReference>
<dbReference type="PANTHER" id="PTHR11432">
    <property type="entry name" value="NADH DEHYDROGENASE SUBUNIT 1"/>
    <property type="match status" value="1"/>
</dbReference>
<dbReference type="PANTHER" id="PTHR11432:SF3">
    <property type="entry name" value="NADH-UBIQUINONE OXIDOREDUCTASE CHAIN 1"/>
    <property type="match status" value="1"/>
</dbReference>
<dbReference type="Pfam" id="PF00146">
    <property type="entry name" value="NADHdh"/>
    <property type="match status" value="1"/>
</dbReference>
<dbReference type="PROSITE" id="PS00668">
    <property type="entry name" value="COMPLEX1_ND1_2"/>
    <property type="match status" value="1"/>
</dbReference>
<protein>
    <recommendedName>
        <fullName evidence="1">NADH-quinone oxidoreductase subunit H 2</fullName>
        <ecNumber evidence="1">7.1.1.-</ecNumber>
    </recommendedName>
    <alternativeName>
        <fullName evidence="1">NADH dehydrogenase I subunit H 2</fullName>
    </alternativeName>
    <alternativeName>
        <fullName evidence="1">NDH-1 subunit H 2</fullName>
    </alternativeName>
</protein>
<sequence>MNGVALDIAIHGAKIALIFFVVLTLAAYLVFAERRLLAWIQDRKGPNRVGPFGLLQPLADLIKLLTKEDFRPAGADKWLFYLAPAMAAVPAILTFAVIPFGAPVTILGREIPLQVADLNVGLLFFLALSSIAVYGVALGGWASNSKYALLGSIRGLAQLISYELSMGLSLVPTVMLAGSLRLSDIVAAQEGVWFIAYQPVAFLIFLISIAAECKRIPFDIPEAEGELVAGFHTEYSGMRFGLFFVGEYINIIVLGGLATTFFLGGWQGPLLPPFVWFSVKTLAFAFFFIWMRGTLPRLRYDQLMHLGWKVLTPLALLNILITGWVLMFV</sequence>
<evidence type="ECO:0000255" key="1">
    <source>
        <dbReference type="HAMAP-Rule" id="MF_01350"/>
    </source>
</evidence>
<proteinExistence type="inferred from homology"/>
<keyword id="KW-0997">Cell inner membrane</keyword>
<keyword id="KW-1003">Cell membrane</keyword>
<keyword id="KW-0472">Membrane</keyword>
<keyword id="KW-0520">NAD</keyword>
<keyword id="KW-0874">Quinone</keyword>
<keyword id="KW-1185">Reference proteome</keyword>
<keyword id="KW-1278">Translocase</keyword>
<keyword id="KW-0812">Transmembrane</keyword>
<keyword id="KW-1133">Transmembrane helix</keyword>
<keyword id="KW-0830">Ubiquinone</keyword>
<accession>Q746T2</accession>